<comment type="function">
    <text evidence="1">This protein is involved in the repair of mismatches in DNA. It is required for dam-dependent methyl-directed DNA mismatch repair. May act as a 'molecular matchmaker', a protein that promotes the formation of a stable complex between two or more DNA-binding proteins in an ATP-dependent manner without itself being part of a final effector complex.</text>
</comment>
<comment type="similarity">
    <text evidence="1">Belongs to the DNA mismatch repair MutL/HexB family.</text>
</comment>
<comment type="sequence caution" evidence="2">
    <conflict type="erroneous initiation">
        <sequence resource="EMBL-CDS" id="AAS71079"/>
    </conflict>
</comment>
<gene>
    <name evidence="1" type="primary">mutL</name>
    <name type="ordered locus">LIC_12514</name>
</gene>
<dbReference type="EMBL" id="AE016823">
    <property type="protein sequence ID" value="AAS71079.1"/>
    <property type="status" value="ALT_INIT"/>
    <property type="molecule type" value="Genomic_DNA"/>
</dbReference>
<dbReference type="RefSeq" id="WP_000516444.1">
    <property type="nucleotide sequence ID" value="NC_005823.1"/>
</dbReference>
<dbReference type="SMR" id="Q72PF7"/>
<dbReference type="GeneID" id="61142391"/>
<dbReference type="KEGG" id="lic:LIC_12514"/>
<dbReference type="HOGENOM" id="CLU_004131_4_1_12"/>
<dbReference type="Proteomes" id="UP000007037">
    <property type="component" value="Chromosome I"/>
</dbReference>
<dbReference type="GO" id="GO:0032300">
    <property type="term" value="C:mismatch repair complex"/>
    <property type="evidence" value="ECO:0007669"/>
    <property type="project" value="InterPro"/>
</dbReference>
<dbReference type="GO" id="GO:0005524">
    <property type="term" value="F:ATP binding"/>
    <property type="evidence" value="ECO:0007669"/>
    <property type="project" value="InterPro"/>
</dbReference>
<dbReference type="GO" id="GO:0016887">
    <property type="term" value="F:ATP hydrolysis activity"/>
    <property type="evidence" value="ECO:0007669"/>
    <property type="project" value="InterPro"/>
</dbReference>
<dbReference type="GO" id="GO:0140664">
    <property type="term" value="F:ATP-dependent DNA damage sensor activity"/>
    <property type="evidence" value="ECO:0007669"/>
    <property type="project" value="InterPro"/>
</dbReference>
<dbReference type="GO" id="GO:0030983">
    <property type="term" value="F:mismatched DNA binding"/>
    <property type="evidence" value="ECO:0007669"/>
    <property type="project" value="InterPro"/>
</dbReference>
<dbReference type="GO" id="GO:0006298">
    <property type="term" value="P:mismatch repair"/>
    <property type="evidence" value="ECO:0007669"/>
    <property type="project" value="UniProtKB-UniRule"/>
</dbReference>
<dbReference type="CDD" id="cd16926">
    <property type="entry name" value="HATPase_MutL-MLH-PMS-like"/>
    <property type="match status" value="1"/>
</dbReference>
<dbReference type="CDD" id="cd00782">
    <property type="entry name" value="MutL_Trans"/>
    <property type="match status" value="1"/>
</dbReference>
<dbReference type="FunFam" id="3.30.565.10:FF:000003">
    <property type="entry name" value="DNA mismatch repair endonuclease MutL"/>
    <property type="match status" value="1"/>
</dbReference>
<dbReference type="FunFam" id="3.30.230.10:FF:000078">
    <property type="entry name" value="DNA mismatch repair protein MutL"/>
    <property type="match status" value="1"/>
</dbReference>
<dbReference type="Gene3D" id="3.30.230.10">
    <property type="match status" value="1"/>
</dbReference>
<dbReference type="Gene3D" id="3.30.565.10">
    <property type="entry name" value="Histidine kinase-like ATPase, C-terminal domain"/>
    <property type="match status" value="1"/>
</dbReference>
<dbReference type="Gene3D" id="3.30.1540.20">
    <property type="entry name" value="MutL, C-terminal domain, dimerisation subdomain"/>
    <property type="match status" value="1"/>
</dbReference>
<dbReference type="Gene3D" id="3.30.1370.100">
    <property type="entry name" value="MutL, C-terminal domain, regulatory subdomain"/>
    <property type="match status" value="1"/>
</dbReference>
<dbReference type="HAMAP" id="MF_00149">
    <property type="entry name" value="DNA_mis_repair"/>
    <property type="match status" value="1"/>
</dbReference>
<dbReference type="InterPro" id="IPR014762">
    <property type="entry name" value="DNA_mismatch_repair_CS"/>
</dbReference>
<dbReference type="InterPro" id="IPR020667">
    <property type="entry name" value="DNA_mismatch_repair_MutL"/>
</dbReference>
<dbReference type="InterPro" id="IPR013507">
    <property type="entry name" value="DNA_mismatch_S5_2-like"/>
</dbReference>
<dbReference type="InterPro" id="IPR036890">
    <property type="entry name" value="HATPase_C_sf"/>
</dbReference>
<dbReference type="InterPro" id="IPR002099">
    <property type="entry name" value="MutL/Mlh/PMS"/>
</dbReference>
<dbReference type="InterPro" id="IPR038973">
    <property type="entry name" value="MutL/Mlh/Pms-like"/>
</dbReference>
<dbReference type="InterPro" id="IPR014790">
    <property type="entry name" value="MutL_C"/>
</dbReference>
<dbReference type="InterPro" id="IPR042120">
    <property type="entry name" value="MutL_C_dimsub"/>
</dbReference>
<dbReference type="InterPro" id="IPR042121">
    <property type="entry name" value="MutL_C_regsub"/>
</dbReference>
<dbReference type="InterPro" id="IPR037198">
    <property type="entry name" value="MutL_C_sf"/>
</dbReference>
<dbReference type="InterPro" id="IPR020568">
    <property type="entry name" value="Ribosomal_Su5_D2-typ_SF"/>
</dbReference>
<dbReference type="InterPro" id="IPR014721">
    <property type="entry name" value="Ribsml_uS5_D2-typ_fold_subgr"/>
</dbReference>
<dbReference type="NCBIfam" id="TIGR00585">
    <property type="entry name" value="mutl"/>
    <property type="match status" value="1"/>
</dbReference>
<dbReference type="PANTHER" id="PTHR10073">
    <property type="entry name" value="DNA MISMATCH REPAIR PROTEIN MLH, PMS, MUTL"/>
    <property type="match status" value="1"/>
</dbReference>
<dbReference type="PANTHER" id="PTHR10073:SF12">
    <property type="entry name" value="DNA MISMATCH REPAIR PROTEIN MLH1"/>
    <property type="match status" value="1"/>
</dbReference>
<dbReference type="Pfam" id="PF01119">
    <property type="entry name" value="DNA_mis_repair"/>
    <property type="match status" value="1"/>
</dbReference>
<dbReference type="Pfam" id="PF13589">
    <property type="entry name" value="HATPase_c_3"/>
    <property type="match status" value="1"/>
</dbReference>
<dbReference type="Pfam" id="PF08676">
    <property type="entry name" value="MutL_C"/>
    <property type="match status" value="1"/>
</dbReference>
<dbReference type="SMART" id="SM01340">
    <property type="entry name" value="DNA_mis_repair"/>
    <property type="match status" value="1"/>
</dbReference>
<dbReference type="SMART" id="SM00853">
    <property type="entry name" value="MutL_C"/>
    <property type="match status" value="1"/>
</dbReference>
<dbReference type="SUPFAM" id="SSF55874">
    <property type="entry name" value="ATPase domain of HSP90 chaperone/DNA topoisomerase II/histidine kinase"/>
    <property type="match status" value="1"/>
</dbReference>
<dbReference type="SUPFAM" id="SSF118116">
    <property type="entry name" value="DNA mismatch repair protein MutL"/>
    <property type="match status" value="1"/>
</dbReference>
<dbReference type="SUPFAM" id="SSF54211">
    <property type="entry name" value="Ribosomal protein S5 domain 2-like"/>
    <property type="match status" value="1"/>
</dbReference>
<dbReference type="PROSITE" id="PS00058">
    <property type="entry name" value="DNA_MISMATCH_REPAIR_1"/>
    <property type="match status" value="1"/>
</dbReference>
<organism>
    <name type="scientific">Leptospira interrogans serogroup Icterohaemorrhagiae serovar copenhageni (strain Fiocruz L1-130)</name>
    <dbReference type="NCBI Taxonomy" id="267671"/>
    <lineage>
        <taxon>Bacteria</taxon>
        <taxon>Pseudomonadati</taxon>
        <taxon>Spirochaetota</taxon>
        <taxon>Spirochaetia</taxon>
        <taxon>Leptospirales</taxon>
        <taxon>Leptospiraceae</taxon>
        <taxon>Leptospira</taxon>
    </lineage>
</organism>
<accession>Q72PF7</accession>
<evidence type="ECO:0000255" key="1">
    <source>
        <dbReference type="HAMAP-Rule" id="MF_00149"/>
    </source>
</evidence>
<evidence type="ECO:0000305" key="2"/>
<keyword id="KW-0227">DNA damage</keyword>
<keyword id="KW-0234">DNA repair</keyword>
<sequence>MGKIQELSPELINQIAAGEVIESAHSVVKELMENSMDASATQVDVESKDGGLSLLRITDNGTGIEPEDLEPALKRHATSKIQDYKDLESVLSYGFRGEALASIASVSRLTLESGTKEQKTAWKTRSVAGKISEKEEIPGFIGTKILVEELFFNTPVRRKFLKSIRSEDKKIRDRVTTQALAREDVRFRLFQDGKEVFVLPTRENKKERIIDLFGENFRDHLLEVSLERGGIQATGYISDPDFYKSNRTGQFIFINGRPIEIKYSSVLLKKAYDELLPPNGHPYCFLFFEIDPSRVDVNVHPAKREIRFLDEDGFNGFFLALIQKELRSSTPVSFLELKKRLLKPAPETHSTTSFYQARSSGKNPLLGRELFSGVSKQEGFELDRMGPGVSLSELTDERVKHSSFVPKKHFGVLFETFILAEAEDGFYIIDQHTAHERIRYEEVLRKLEKRNYGIQPLLTPIRIDVSKQEQEDILNRKKEYEEVGIFLDPLGEDSIVLREIPAYMEPGQEKEIVLDFLNRTEGKETSEPELYDLMAKCVACRSAIKKGDQLSDPILAEILNRLSYCENPSRCPHGRPTLVKLSRDDLERMFHRK</sequence>
<name>MUTL_LEPIC</name>
<proteinExistence type="inferred from homology"/>
<reference key="1">
    <citation type="journal article" date="2004" name="J. Bacteriol.">
        <title>Comparative genomics of two Leptospira interrogans serovars reveals novel insights into physiology and pathogenesis.</title>
        <authorList>
            <person name="Nascimento A.L.T.O."/>
            <person name="Ko A.I."/>
            <person name="Martins E.A.L."/>
            <person name="Monteiro-Vitorello C.B."/>
            <person name="Ho P.L."/>
            <person name="Haake D.A."/>
            <person name="Verjovski-Almeida S."/>
            <person name="Hartskeerl R.A."/>
            <person name="Marques M.V."/>
            <person name="Oliveira M.C."/>
            <person name="Menck C.F.M."/>
            <person name="Leite L.C.C."/>
            <person name="Carrer H."/>
            <person name="Coutinho L.L."/>
            <person name="Degrave W.M."/>
            <person name="Dellagostin O.A."/>
            <person name="El-Dorry H."/>
            <person name="Ferro E.S."/>
            <person name="Ferro M.I.T."/>
            <person name="Furlan L.R."/>
            <person name="Gamberini M."/>
            <person name="Giglioti E.A."/>
            <person name="Goes-Neto A."/>
            <person name="Goldman G.H."/>
            <person name="Goldman M.H.S."/>
            <person name="Harakava R."/>
            <person name="Jeronimo S.M.B."/>
            <person name="Junqueira-de-Azevedo I.L.M."/>
            <person name="Kimura E.T."/>
            <person name="Kuramae E.E."/>
            <person name="Lemos E.G.M."/>
            <person name="Lemos M.V.F."/>
            <person name="Marino C.L."/>
            <person name="Nunes L.R."/>
            <person name="de Oliveira R.C."/>
            <person name="Pereira G.G."/>
            <person name="Reis M.S."/>
            <person name="Schriefer A."/>
            <person name="Siqueira W.J."/>
            <person name="Sommer P."/>
            <person name="Tsai S.M."/>
            <person name="Simpson A.J.G."/>
            <person name="Ferro J.A."/>
            <person name="Camargo L.E.A."/>
            <person name="Kitajima J.P."/>
            <person name="Setubal J.C."/>
            <person name="Van Sluys M.A."/>
        </authorList>
    </citation>
    <scope>NUCLEOTIDE SEQUENCE [LARGE SCALE GENOMIC DNA]</scope>
    <source>
        <strain>Fiocruz L1-130</strain>
    </source>
</reference>
<feature type="chain" id="PRO_0000177950" description="DNA mismatch repair protein MutL">
    <location>
        <begin position="1"/>
        <end position="593"/>
    </location>
</feature>
<protein>
    <recommendedName>
        <fullName evidence="1">DNA mismatch repair protein MutL</fullName>
    </recommendedName>
</protein>